<proteinExistence type="evidence at protein level"/>
<evidence type="ECO:0000250" key="1"/>
<evidence type="ECO:0000250" key="2">
    <source>
        <dbReference type="UniProtKB" id="Q9ET61"/>
    </source>
</evidence>
<evidence type="ECO:0000250" key="3">
    <source>
        <dbReference type="UniProtKB" id="Q9NPY3"/>
    </source>
</evidence>
<evidence type="ECO:0000255" key="4"/>
<evidence type="ECO:0000255" key="5">
    <source>
        <dbReference type="PROSITE-ProRule" id="PRU00040"/>
    </source>
</evidence>
<evidence type="ECO:0000255" key="6">
    <source>
        <dbReference type="PROSITE-ProRule" id="PRU00076"/>
    </source>
</evidence>
<evidence type="ECO:0000256" key="7">
    <source>
        <dbReference type="SAM" id="MobiDB-lite"/>
    </source>
</evidence>
<evidence type="ECO:0000269" key="8">
    <source>
    </source>
</evidence>
<evidence type="ECO:0000269" key="9">
    <source>
    </source>
</evidence>
<evidence type="ECO:0000269" key="10">
    <source>
    </source>
</evidence>
<evidence type="ECO:0007744" key="11">
    <source>
    </source>
</evidence>
<reference key="1">
    <citation type="journal article" date="2000" name="Mol. Immunol.">
        <title>Characterization of the murine homolog of C1qR(P): identical cellular expression pattern, chromosomal location and functional activity of the human and murine C1qR(P).</title>
        <authorList>
            <person name="Kim T.S."/>
            <person name="Park M."/>
            <person name="Nepomuceno R.R."/>
            <person name="Palmarini G."/>
            <person name="Winokur S."/>
            <person name="Cotman C.A."/>
            <person name="Bengtsson U."/>
            <person name="Tenner A.J."/>
        </authorList>
    </citation>
    <scope>NUCLEOTIDE SEQUENCE [GENOMIC DNA]</scope>
    <source>
        <strain>129/Sv</strain>
    </source>
</reference>
<reference key="2">
    <citation type="journal article" date="1999" name="Immunity">
        <title>The molecular characterization of the fetal stem cell marker AA4.</title>
        <authorList>
            <person name="Petrenko O."/>
            <person name="Beavis A."/>
            <person name="Klaine M."/>
            <person name="Kittappa R."/>
            <person name="Godin I."/>
            <person name="Lemischka I.R."/>
        </authorList>
    </citation>
    <scope>NUCLEOTIDE SEQUENCE [MRNA]</scope>
    <source>
        <tissue>Leukemia</tissue>
    </source>
</reference>
<reference key="3">
    <citation type="journal article" date="1999" name="Mamm. Genome">
        <title>Cloning of the mouse homolog of the 126-kDa human C1q/MBL/SP-A receptor, C1qRp.</title>
        <authorList>
            <person name="Norsworthy P.J."/>
            <person name="Taylor P.R."/>
            <person name="Walport M.J."/>
            <person name="Botto M."/>
        </authorList>
    </citation>
    <scope>NUCLEOTIDE SEQUENCE [GENOMIC DNA]</scope>
    <source>
        <strain>129/Sv</strain>
        <tissue>Endothelial cell</tissue>
        <tissue>Spleen</tissue>
    </source>
</reference>
<reference key="4">
    <citation type="journal article" date="2005" name="Science">
        <title>The transcriptional landscape of the mammalian genome.</title>
        <authorList>
            <person name="Carninci P."/>
            <person name="Kasukawa T."/>
            <person name="Katayama S."/>
            <person name="Gough J."/>
            <person name="Frith M.C."/>
            <person name="Maeda N."/>
            <person name="Oyama R."/>
            <person name="Ravasi T."/>
            <person name="Lenhard B."/>
            <person name="Wells C."/>
            <person name="Kodzius R."/>
            <person name="Shimokawa K."/>
            <person name="Bajic V.B."/>
            <person name="Brenner S.E."/>
            <person name="Batalov S."/>
            <person name="Forrest A.R."/>
            <person name="Zavolan M."/>
            <person name="Davis M.J."/>
            <person name="Wilming L.G."/>
            <person name="Aidinis V."/>
            <person name="Allen J.E."/>
            <person name="Ambesi-Impiombato A."/>
            <person name="Apweiler R."/>
            <person name="Aturaliya R.N."/>
            <person name="Bailey T.L."/>
            <person name="Bansal M."/>
            <person name="Baxter L."/>
            <person name="Beisel K.W."/>
            <person name="Bersano T."/>
            <person name="Bono H."/>
            <person name="Chalk A.M."/>
            <person name="Chiu K.P."/>
            <person name="Choudhary V."/>
            <person name="Christoffels A."/>
            <person name="Clutterbuck D.R."/>
            <person name="Crowe M.L."/>
            <person name="Dalla E."/>
            <person name="Dalrymple B.P."/>
            <person name="de Bono B."/>
            <person name="Della Gatta G."/>
            <person name="di Bernardo D."/>
            <person name="Down T."/>
            <person name="Engstrom P."/>
            <person name="Fagiolini M."/>
            <person name="Faulkner G."/>
            <person name="Fletcher C.F."/>
            <person name="Fukushima T."/>
            <person name="Furuno M."/>
            <person name="Futaki S."/>
            <person name="Gariboldi M."/>
            <person name="Georgii-Hemming P."/>
            <person name="Gingeras T.R."/>
            <person name="Gojobori T."/>
            <person name="Green R.E."/>
            <person name="Gustincich S."/>
            <person name="Harbers M."/>
            <person name="Hayashi Y."/>
            <person name="Hensch T.K."/>
            <person name="Hirokawa N."/>
            <person name="Hill D."/>
            <person name="Huminiecki L."/>
            <person name="Iacono M."/>
            <person name="Ikeo K."/>
            <person name="Iwama A."/>
            <person name="Ishikawa T."/>
            <person name="Jakt M."/>
            <person name="Kanapin A."/>
            <person name="Katoh M."/>
            <person name="Kawasawa Y."/>
            <person name="Kelso J."/>
            <person name="Kitamura H."/>
            <person name="Kitano H."/>
            <person name="Kollias G."/>
            <person name="Krishnan S.P."/>
            <person name="Kruger A."/>
            <person name="Kummerfeld S.K."/>
            <person name="Kurochkin I.V."/>
            <person name="Lareau L.F."/>
            <person name="Lazarevic D."/>
            <person name="Lipovich L."/>
            <person name="Liu J."/>
            <person name="Liuni S."/>
            <person name="McWilliam S."/>
            <person name="Madan Babu M."/>
            <person name="Madera M."/>
            <person name="Marchionni L."/>
            <person name="Matsuda H."/>
            <person name="Matsuzawa S."/>
            <person name="Miki H."/>
            <person name="Mignone F."/>
            <person name="Miyake S."/>
            <person name="Morris K."/>
            <person name="Mottagui-Tabar S."/>
            <person name="Mulder N."/>
            <person name="Nakano N."/>
            <person name="Nakauchi H."/>
            <person name="Ng P."/>
            <person name="Nilsson R."/>
            <person name="Nishiguchi S."/>
            <person name="Nishikawa S."/>
            <person name="Nori F."/>
            <person name="Ohara O."/>
            <person name="Okazaki Y."/>
            <person name="Orlando V."/>
            <person name="Pang K.C."/>
            <person name="Pavan W.J."/>
            <person name="Pavesi G."/>
            <person name="Pesole G."/>
            <person name="Petrovsky N."/>
            <person name="Piazza S."/>
            <person name="Reed J."/>
            <person name="Reid J.F."/>
            <person name="Ring B.Z."/>
            <person name="Ringwald M."/>
            <person name="Rost B."/>
            <person name="Ruan Y."/>
            <person name="Salzberg S.L."/>
            <person name="Sandelin A."/>
            <person name="Schneider C."/>
            <person name="Schoenbach C."/>
            <person name="Sekiguchi K."/>
            <person name="Semple C.A."/>
            <person name="Seno S."/>
            <person name="Sessa L."/>
            <person name="Sheng Y."/>
            <person name="Shibata Y."/>
            <person name="Shimada H."/>
            <person name="Shimada K."/>
            <person name="Silva D."/>
            <person name="Sinclair B."/>
            <person name="Sperling S."/>
            <person name="Stupka E."/>
            <person name="Sugiura K."/>
            <person name="Sultana R."/>
            <person name="Takenaka Y."/>
            <person name="Taki K."/>
            <person name="Tammoja K."/>
            <person name="Tan S.L."/>
            <person name="Tang S."/>
            <person name="Taylor M.S."/>
            <person name="Tegner J."/>
            <person name="Teichmann S.A."/>
            <person name="Ueda H.R."/>
            <person name="van Nimwegen E."/>
            <person name="Verardo R."/>
            <person name="Wei C.L."/>
            <person name="Yagi K."/>
            <person name="Yamanishi H."/>
            <person name="Zabarovsky E."/>
            <person name="Zhu S."/>
            <person name="Zimmer A."/>
            <person name="Hide W."/>
            <person name="Bult C."/>
            <person name="Grimmond S.M."/>
            <person name="Teasdale R.D."/>
            <person name="Liu E.T."/>
            <person name="Brusic V."/>
            <person name="Quackenbush J."/>
            <person name="Wahlestedt C."/>
            <person name="Mattick J.S."/>
            <person name="Hume D.A."/>
            <person name="Kai C."/>
            <person name="Sasaki D."/>
            <person name="Tomaru Y."/>
            <person name="Fukuda S."/>
            <person name="Kanamori-Katayama M."/>
            <person name="Suzuki M."/>
            <person name="Aoki J."/>
            <person name="Arakawa T."/>
            <person name="Iida J."/>
            <person name="Imamura K."/>
            <person name="Itoh M."/>
            <person name="Kato T."/>
            <person name="Kawaji H."/>
            <person name="Kawagashira N."/>
            <person name="Kawashima T."/>
            <person name="Kojima M."/>
            <person name="Kondo S."/>
            <person name="Konno H."/>
            <person name="Nakano K."/>
            <person name="Ninomiya N."/>
            <person name="Nishio T."/>
            <person name="Okada M."/>
            <person name="Plessy C."/>
            <person name="Shibata K."/>
            <person name="Shiraki T."/>
            <person name="Suzuki S."/>
            <person name="Tagami M."/>
            <person name="Waki K."/>
            <person name="Watahiki A."/>
            <person name="Okamura-Oho Y."/>
            <person name="Suzuki H."/>
            <person name="Kawai J."/>
            <person name="Hayashizaki Y."/>
        </authorList>
    </citation>
    <scope>NUCLEOTIDE SEQUENCE [LARGE SCALE MRNA]</scope>
    <source>
        <strain>C57BL/6J</strain>
        <strain>NOD</strain>
        <tissue>Diencephalon</tissue>
    </source>
</reference>
<reference key="5">
    <citation type="journal article" date="2009" name="PLoS Biol.">
        <title>Lineage-specific biology revealed by a finished genome assembly of the mouse.</title>
        <authorList>
            <person name="Church D.M."/>
            <person name="Goodstadt L."/>
            <person name="Hillier L.W."/>
            <person name="Zody M.C."/>
            <person name="Goldstein S."/>
            <person name="She X."/>
            <person name="Bult C.J."/>
            <person name="Agarwala R."/>
            <person name="Cherry J.L."/>
            <person name="DiCuccio M."/>
            <person name="Hlavina W."/>
            <person name="Kapustin Y."/>
            <person name="Meric P."/>
            <person name="Maglott D."/>
            <person name="Birtle Z."/>
            <person name="Marques A.C."/>
            <person name="Graves T."/>
            <person name="Zhou S."/>
            <person name="Teague B."/>
            <person name="Potamousis K."/>
            <person name="Churas C."/>
            <person name="Place M."/>
            <person name="Herschleb J."/>
            <person name="Runnheim R."/>
            <person name="Forrest D."/>
            <person name="Amos-Landgraf J."/>
            <person name="Schwartz D.C."/>
            <person name="Cheng Z."/>
            <person name="Lindblad-Toh K."/>
            <person name="Eichler E.E."/>
            <person name="Ponting C.P."/>
        </authorList>
    </citation>
    <scope>NUCLEOTIDE SEQUENCE [LARGE SCALE GENOMIC DNA]</scope>
    <source>
        <strain>C57BL/6J</strain>
    </source>
</reference>
<reference key="6">
    <citation type="journal article" date="2004" name="J. Immunol.">
        <title>Murine CD93 (C1qRp) contributes to the removal of apoptotic cells in vivo but is not required for C1q-mediated enhancement of phagocytosis.</title>
        <authorList>
            <person name="Norsworthy P.J."/>
            <person name="Fossati-Jimack L."/>
            <person name="Cortes-Hernandez J."/>
            <person name="Taylor P.R."/>
            <person name="Bygrave A.E."/>
            <person name="Thompson R.D."/>
            <person name="Nourshargh S."/>
            <person name="Walport M.J."/>
            <person name="Botto M."/>
        </authorList>
    </citation>
    <scope>FUNCTION</scope>
    <scope>DISRUPTION PHENOTYPE</scope>
</reference>
<reference key="7">
    <citation type="journal article" date="2007" name="J. Immunol.">
        <title>Quantitative time-resolved phosphoproteomic analysis of mast cell signaling.</title>
        <authorList>
            <person name="Cao L."/>
            <person name="Yu K."/>
            <person name="Banh C."/>
            <person name="Nguyen V."/>
            <person name="Ritz A."/>
            <person name="Raphael B.J."/>
            <person name="Kawakami Y."/>
            <person name="Kawakami T."/>
            <person name="Salomon A.R."/>
        </authorList>
    </citation>
    <scope>PHOSPHORYLATION [LARGE SCALE ANALYSIS] AT TYR-636</scope>
    <scope>IDENTIFICATION BY MASS SPECTROMETRY [LARGE SCALE ANALYSIS]</scope>
    <source>
        <tissue>Mast cell</tissue>
    </source>
</reference>
<reference key="8">
    <citation type="journal article" date="2010" name="Cell">
        <title>A tissue-specific atlas of mouse protein phosphorylation and expression.</title>
        <authorList>
            <person name="Huttlin E.L."/>
            <person name="Jedrychowski M.P."/>
            <person name="Elias J.E."/>
            <person name="Goswami T."/>
            <person name="Rad R."/>
            <person name="Beausoleil S.A."/>
            <person name="Villen J."/>
            <person name="Haas W."/>
            <person name="Sowa M.E."/>
            <person name="Gygi S.P."/>
        </authorList>
    </citation>
    <scope>IDENTIFICATION BY MASS SPECTROMETRY [LARGE SCALE ANALYSIS]</scope>
    <source>
        <tissue>Brown adipose tissue</tissue>
        <tissue>Heart</tissue>
        <tissue>Lung</tissue>
        <tissue>Pancreas</tissue>
        <tissue>Spleen</tissue>
    </source>
</reference>
<reference key="9">
    <citation type="journal article" date="2010" name="J. Immunol.">
        <title>CD93/AA4.1: a novel regulator of inflammation in murine focal cerebral ischemia.</title>
        <authorList>
            <person name="Harhausen D."/>
            <person name="Prinz V."/>
            <person name="Ziegler G."/>
            <person name="Gertz K."/>
            <person name="Endres M."/>
            <person name="Lehrach H."/>
            <person name="Gasque P."/>
            <person name="Botto M."/>
            <person name="Stahel P.F."/>
            <person name="Dirnagl U."/>
            <person name="Nietfeld W."/>
            <person name="Trendelenburg G."/>
        </authorList>
    </citation>
    <scope>FUNCTION IN INFLAMMATION</scope>
    <scope>DISRUPTION PHENOTYPE</scope>
</reference>
<reference key="10">
    <citation type="journal article" date="2024" name="JCI Insight">
        <title>CD93 maintains endothelial barrier function and limits metastatic dissemination.</title>
        <authorList>
            <person name="Vemuri K."/>
            <person name="de Alves Pereira B."/>
            <person name="Fuenzalida P."/>
            <person name="Subashi Y."/>
            <person name="Barbera S."/>
            <person name="van Hooren L."/>
            <person name="Hedlund M."/>
            <person name="Ponten F."/>
            <person name="Lindskog C."/>
            <person name="Olsson A.K."/>
            <person name="Lugano R."/>
            <person name="Dimberg A."/>
        </authorList>
    </citation>
    <scope>FUNCTION</scope>
    <scope>DISRUPTION PHENOTYPE</scope>
    <scope>INTERACTION WITH VEGFR2</scope>
    <scope>SUBCELLULAR LOCATION</scope>
</reference>
<protein>
    <recommendedName>
        <fullName>Complement component C1q receptor</fullName>
    </recommendedName>
    <alternativeName>
        <fullName>C1q/MBL/SPA receptor</fullName>
        <shortName>C1qR(p)</shortName>
        <shortName>C1qRp</shortName>
    </alternativeName>
    <alternativeName>
        <fullName>Cell surface antigen AA4</fullName>
    </alternativeName>
    <alternativeName>
        <fullName>Complement component 1 q subcomponent receptor 1</fullName>
    </alternativeName>
    <alternativeName>
        <fullName>Lymphocyte antigen 68</fullName>
        <shortName>Ly-68</shortName>
    </alternativeName>
    <cdAntigenName>CD93</cdAntigenName>
</protein>
<gene>
    <name type="primary">Cd93</name>
    <name type="synonym">Aa4</name>
    <name type="synonym">C1qr1</name>
    <name type="synonym">C1qrp</name>
    <name type="synonym">Ly68</name>
</gene>
<comment type="function">
    <text evidence="3 8 9 10">Cell surface receptor that plays a role in various physiological processes including inflammation, phagocytosis, and cell adhesion (PubMed:15004139, PubMed:20439917, PubMed:38441970). Plays a role in phagocytosis and enhances the uptake of apoptotic cells and immune complexes by acting as a receptor for defense collagens including surfactant protein A/SFTPA1, C1q, and mannose-binding lectin (MBL2) (PubMed:15004139). Plays a role in the regulation of endothelial cell function and adhesion by activating angiogenesis. Mechanistically, exerts its angiogenic function by associating with beta-dystroglycan, leading to SRC-dependent phosphorylation and subsequent recruitment of CBL. In turn, CBL provides a docking site for downstream signaling components, such as CRKL to enhance cell migration. Participates in angiogenesis also by acting as a receptor for the ECM pan-endothelial glycoprotein multimerin-2/MMRN2 and IGFBP7 ligands. Both ligands play a non-redundant role in CD93-mediated endothelial cell function (By similarity). Acts as a key regulator of endothelial barrier function through modulating VEGFR2 function (PubMed:38441970).</text>
</comment>
<comment type="subunit">
    <text evidence="3 10">Homodimer. Interacts with C1QBP; the association may represent a cell surface C1q receptor. Interacts with surfactant protein A/SFTPA1. Interacts with multimerin-2/MMRN2. Interacts with DAG1; this interaction plays an important role in endothelial cell migration. Interacts with CBL. Interacts with IGFBP7 (By similarity). Interacts with VEGFR2 (PubMed:38441970).</text>
</comment>
<comment type="subcellular location">
    <subcellularLocation>
        <location evidence="10">Cell membrane</location>
        <topology evidence="3">Single-pass type I membrane protein</topology>
    </subcellularLocation>
</comment>
<comment type="tissue specificity">
    <text>Expressed in lung, heart and bone marrow. Expressed at lower level in ovary, whole embryo and fetal liver. Not detected in brain, adult liver or thymus. Highly expressed in peritoneal cavity and bone marrow macrophages. Not detected in epithelial cells.</text>
</comment>
<comment type="developmental stage">
    <text>First detectable in day 9 embryos, in the endocardium and vascular endothelium in the anterior part of the embryo. Expression in endothelial cells, initially restricted to aorta, omphalomesenteric and umbilical arteries, later extends to subcardinal veins, intersomitic arteries and perineural vessels. On day 10, detectable in the entire embryo.</text>
</comment>
<comment type="PTM">
    <text evidence="3">N- and O-glycosylated.</text>
</comment>
<comment type="PTM">
    <text evidence="3">Phosphorylated on Tyr-620 and Tyr-636 by SRC; these phosphorylations promote endothelial cell adhesion and migration.</text>
</comment>
<comment type="disruption phenotype">
    <text evidence="8 9 10">Homozygous CD93-deficient mice are viable and fertile under specific pathogen-free conditions. However, they are defective in the clearance of apoptotic cells in vivo (PubMed:15004139). In addition, CD93 deficiency results in metastatic dissemination by impairing the vessel integrity in a VEGFR2-dependent manner (PubMed:38441970). In the postischemic brain tissue, CD93 deficiency leads to increased inflammatory cell infiltration (PubMed:20439917).</text>
</comment>
<accession>O89103</accession>
<accession>A2AVY5</accession>
<accession>Q3U2X0</accession>
<feature type="signal peptide" evidence="4">
    <location>
        <begin position="1"/>
        <end position="22"/>
    </location>
</feature>
<feature type="chain" id="PRO_0000017368" description="Complement component C1q receptor">
    <location>
        <begin position="23"/>
        <end position="644"/>
    </location>
</feature>
<feature type="topological domain" description="Extracellular" evidence="4">
    <location>
        <begin position="23"/>
        <end position="572"/>
    </location>
</feature>
<feature type="transmembrane region" description="Helical" evidence="4">
    <location>
        <begin position="573"/>
        <end position="593"/>
    </location>
</feature>
<feature type="topological domain" description="Cytoplasmic" evidence="4">
    <location>
        <begin position="594"/>
        <end position="644"/>
    </location>
</feature>
<feature type="domain" description="C-type lectin" evidence="5">
    <location>
        <begin position="31"/>
        <end position="173"/>
    </location>
</feature>
<feature type="domain" description="EGF-like 1" evidence="6">
    <location>
        <begin position="257"/>
        <end position="298"/>
    </location>
</feature>
<feature type="domain" description="EGF-like 2" evidence="6">
    <location>
        <begin position="299"/>
        <end position="341"/>
    </location>
</feature>
<feature type="domain" description="EGF-like 3; calcium-binding" evidence="6">
    <location>
        <begin position="342"/>
        <end position="381"/>
    </location>
</feature>
<feature type="domain" description="EGF-like 4; calcium-binding" evidence="6">
    <location>
        <begin position="382"/>
        <end position="423"/>
    </location>
</feature>
<feature type="domain" description="EGF-like 5; calcium-binding" evidence="6">
    <location>
        <begin position="424"/>
        <end position="465"/>
    </location>
</feature>
<feature type="region of interest" description="Disordered" evidence="7">
    <location>
        <begin position="473"/>
        <end position="508"/>
    </location>
</feature>
<feature type="region of interest" description="Disordered" evidence="7">
    <location>
        <begin position="605"/>
        <end position="644"/>
    </location>
</feature>
<feature type="compositionally biased region" description="Basic and acidic residues" evidence="7">
    <location>
        <begin position="478"/>
        <end position="489"/>
    </location>
</feature>
<feature type="compositionally biased region" description="Low complexity" evidence="7">
    <location>
        <begin position="490"/>
        <end position="501"/>
    </location>
</feature>
<feature type="compositionally biased region" description="Polar residues" evidence="7">
    <location>
        <begin position="631"/>
        <end position="644"/>
    </location>
</feature>
<feature type="modified residue" description="Phosphoserine" evidence="2">
    <location>
        <position position="619"/>
    </location>
</feature>
<feature type="modified residue" description="Phosphotyrosine" evidence="3">
    <location>
        <position position="620"/>
    </location>
</feature>
<feature type="modified residue" description="Phosphotyrosine" evidence="11">
    <location>
        <position position="636"/>
    </location>
</feature>
<feature type="glycosylation site" description="N-linked (GlcNAc...) asparagine" evidence="4">
    <location>
        <position position="102"/>
    </location>
</feature>
<feature type="glycosylation site" description="N-linked (GlcNAc...) asparagine" evidence="4">
    <location>
        <position position="322"/>
    </location>
</feature>
<feature type="disulfide bond" evidence="1">
    <location>
        <begin position="140"/>
        <end position="164"/>
    </location>
</feature>
<feature type="disulfide bond" evidence="1">
    <location>
        <begin position="261"/>
        <end position="272"/>
    </location>
</feature>
<feature type="disulfide bond" evidence="1">
    <location>
        <begin position="268"/>
        <end position="282"/>
    </location>
</feature>
<feature type="disulfide bond" evidence="1">
    <location>
        <begin position="284"/>
        <end position="297"/>
    </location>
</feature>
<feature type="disulfide bond" evidence="1">
    <location>
        <begin position="303"/>
        <end position="314"/>
    </location>
</feature>
<feature type="disulfide bond" evidence="1">
    <location>
        <begin position="308"/>
        <end position="325"/>
    </location>
</feature>
<feature type="disulfide bond" evidence="1">
    <location>
        <begin position="327"/>
        <end position="340"/>
    </location>
</feature>
<feature type="disulfide bond" evidence="1">
    <location>
        <begin position="346"/>
        <end position="355"/>
    </location>
</feature>
<feature type="disulfide bond" evidence="1">
    <location>
        <begin position="351"/>
        <end position="364"/>
    </location>
</feature>
<feature type="disulfide bond" evidence="1">
    <location>
        <begin position="366"/>
        <end position="380"/>
    </location>
</feature>
<feature type="disulfide bond" evidence="1">
    <location>
        <begin position="386"/>
        <end position="397"/>
    </location>
</feature>
<feature type="disulfide bond" evidence="1">
    <location>
        <begin position="393"/>
        <end position="406"/>
    </location>
</feature>
<feature type="disulfide bond" evidence="1">
    <location>
        <begin position="408"/>
        <end position="422"/>
    </location>
</feature>
<feature type="disulfide bond" evidence="1">
    <location>
        <begin position="428"/>
        <end position="440"/>
    </location>
</feature>
<feature type="disulfide bond" evidence="1">
    <location>
        <begin position="436"/>
        <end position="449"/>
    </location>
</feature>
<feature type="disulfide bond" evidence="1">
    <location>
        <begin position="451"/>
        <end position="464"/>
    </location>
</feature>
<sequence>MAISTGLFLLLGLLGQPWAGAAADSQAVVCEGTACYTAHWGKLSAAEAQHRCNENGGNLATVKSEEEARHVQQALTQLLKTKAPLEAKMGKFWIGLQREKGNCTYHDLPMRGFSWVGGGEDTAYSNWYKASKSSCIFKRCVSLILDLSLTPHPSHLPKWHESPCGTPEAPGNSIEGFLCKFNFKGMCRPLALGGPGRVTYTTPFQATTSSLEAVPFASVANVACGDEAKSETHYFLCNEKTPGIFHWGSSGPLCVSPKFGCSFNNGGCQQDCFEGGDGSFRCGCRPGFRLLDDLVTCASRNPCSSNPCTGGGMCHSVPLSENYTCRCPSGYQLDSSQVHCVDIDECQDSPCAQDCVNTLGSFHCECWVGYQPSGPKEEACEDVDECAAANSPCAQGCINTDGSFYCSCKEGYIVSGEDSTQCEDIDECSDARGNPCDSLCFNTDGSFRCGCPPGWELAPNGVFCSRGTVFSELPARPPQKEDNDDRKESTMPPTEMPSSPSGSKDVSNRAQTTGLFVQSDIPTASVPLEIEIPSEVSDVWFELGTYLPTTSGHSKPTHEDSVSAHSDTDGQNLLLFYILGTVVAISLLLVLALGILIYHKRRAKKEEIKEKKPQNAADSYSWVPERAESQAPENQYSPTPGTDC</sequence>
<organism>
    <name type="scientific">Mus musculus</name>
    <name type="common">Mouse</name>
    <dbReference type="NCBI Taxonomy" id="10090"/>
    <lineage>
        <taxon>Eukaryota</taxon>
        <taxon>Metazoa</taxon>
        <taxon>Chordata</taxon>
        <taxon>Craniata</taxon>
        <taxon>Vertebrata</taxon>
        <taxon>Euteleostomi</taxon>
        <taxon>Mammalia</taxon>
        <taxon>Eutheria</taxon>
        <taxon>Euarchontoglires</taxon>
        <taxon>Glires</taxon>
        <taxon>Rodentia</taxon>
        <taxon>Myomorpha</taxon>
        <taxon>Muroidea</taxon>
        <taxon>Muridae</taxon>
        <taxon>Murinae</taxon>
        <taxon>Mus</taxon>
        <taxon>Mus</taxon>
    </lineage>
</organism>
<name>C1QR1_MOUSE</name>
<dbReference type="EMBL" id="AF074856">
    <property type="protein sequence ID" value="AAC63274.1"/>
    <property type="molecule type" value="Genomic_DNA"/>
</dbReference>
<dbReference type="EMBL" id="AF081789">
    <property type="protein sequence ID" value="AAC62649.1"/>
    <property type="molecule type" value="mRNA"/>
</dbReference>
<dbReference type="EMBL" id="AF099939">
    <property type="protein sequence ID" value="AAD47906.1"/>
    <property type="molecule type" value="Genomic_DNA"/>
</dbReference>
<dbReference type="EMBL" id="AF099938">
    <property type="protein sequence ID" value="AAD47906.1"/>
    <property type="status" value="JOINED"/>
    <property type="molecule type" value="Genomic_DNA"/>
</dbReference>
<dbReference type="EMBL" id="AK079060">
    <property type="protein sequence ID" value="BAC37518.1"/>
    <property type="molecule type" value="mRNA"/>
</dbReference>
<dbReference type="EMBL" id="AK155060">
    <property type="protein sequence ID" value="BAE33020.1"/>
    <property type="molecule type" value="mRNA"/>
</dbReference>
<dbReference type="EMBL" id="AL935149">
    <property type="status" value="NOT_ANNOTATED_CDS"/>
    <property type="molecule type" value="Genomic_DNA"/>
</dbReference>
<dbReference type="CCDS" id="CCDS16839.1"/>
<dbReference type="RefSeq" id="NP_034870.1">
    <property type="nucleotide sequence ID" value="NM_010740.3"/>
</dbReference>
<dbReference type="SMR" id="O89103"/>
<dbReference type="FunCoup" id="O89103">
    <property type="interactions" value="161"/>
</dbReference>
<dbReference type="STRING" id="10090.ENSMUSP00000096876"/>
<dbReference type="GlyCosmos" id="O89103">
    <property type="glycosylation" value="2 sites, No reported glycans"/>
</dbReference>
<dbReference type="GlyGen" id="O89103">
    <property type="glycosylation" value="4 sites, 2 N-linked glycans (2 sites), 1 O-linked glycan (1 site)"/>
</dbReference>
<dbReference type="iPTMnet" id="O89103"/>
<dbReference type="PhosphoSitePlus" id="O89103"/>
<dbReference type="SwissPalm" id="O89103"/>
<dbReference type="CPTAC" id="non-CPTAC-3563"/>
<dbReference type="PaxDb" id="10090-ENSMUSP00000096876"/>
<dbReference type="PeptideAtlas" id="O89103"/>
<dbReference type="ProteomicsDB" id="273727"/>
<dbReference type="Antibodypedia" id="2408">
    <property type="antibodies" value="595 antibodies from 36 providers"/>
</dbReference>
<dbReference type="DNASU" id="17064"/>
<dbReference type="Ensembl" id="ENSMUST00000099269.4">
    <property type="protein sequence ID" value="ENSMUSP00000096876.4"/>
    <property type="gene ID" value="ENSMUSG00000027435.9"/>
</dbReference>
<dbReference type="GeneID" id="17064"/>
<dbReference type="KEGG" id="mmu:17064"/>
<dbReference type="UCSC" id="uc008mte.1">
    <property type="organism name" value="mouse"/>
</dbReference>
<dbReference type="AGR" id="MGI:106664"/>
<dbReference type="CTD" id="22918"/>
<dbReference type="MGI" id="MGI:106664">
    <property type="gene designation" value="Cd93"/>
</dbReference>
<dbReference type="VEuPathDB" id="HostDB:ENSMUSG00000027435"/>
<dbReference type="eggNOG" id="ENOG502QUVB">
    <property type="taxonomic scope" value="Eukaryota"/>
</dbReference>
<dbReference type="GeneTree" id="ENSGT00940000156996"/>
<dbReference type="HOGENOM" id="CLU_027075_1_0_1"/>
<dbReference type="InParanoid" id="O89103"/>
<dbReference type="OMA" id="YTNWHKE"/>
<dbReference type="OrthoDB" id="10045365at2759"/>
<dbReference type="PhylomeDB" id="O89103"/>
<dbReference type="TreeFam" id="TF330714"/>
<dbReference type="Reactome" id="R-MMU-6798695">
    <property type="pathway name" value="Neutrophil degranulation"/>
</dbReference>
<dbReference type="BioGRID-ORCS" id="17064">
    <property type="hits" value="2 hits in 79 CRISPR screens"/>
</dbReference>
<dbReference type="ChiTaRS" id="Cd93">
    <property type="organism name" value="mouse"/>
</dbReference>
<dbReference type="PRO" id="PR:O89103"/>
<dbReference type="Proteomes" id="UP000000589">
    <property type="component" value="Chromosome 2"/>
</dbReference>
<dbReference type="RNAct" id="O89103">
    <property type="molecule type" value="protein"/>
</dbReference>
<dbReference type="Bgee" id="ENSMUSG00000027435">
    <property type="expression patterns" value="Expressed in brain blood vessel and 225 other cell types or tissues"/>
</dbReference>
<dbReference type="GO" id="GO:0009986">
    <property type="term" value="C:cell surface"/>
    <property type="evidence" value="ECO:0000314"/>
    <property type="project" value="MGI"/>
</dbReference>
<dbReference type="GO" id="GO:0031410">
    <property type="term" value="C:cytoplasmic vesicle"/>
    <property type="evidence" value="ECO:0000314"/>
    <property type="project" value="MGI"/>
</dbReference>
<dbReference type="GO" id="GO:0005886">
    <property type="term" value="C:plasma membrane"/>
    <property type="evidence" value="ECO:0000314"/>
    <property type="project" value="MGI"/>
</dbReference>
<dbReference type="GO" id="GO:0005509">
    <property type="term" value="F:calcium ion binding"/>
    <property type="evidence" value="ECO:0007669"/>
    <property type="project" value="InterPro"/>
</dbReference>
<dbReference type="GO" id="GO:0030246">
    <property type="term" value="F:carbohydrate binding"/>
    <property type="evidence" value="ECO:0007669"/>
    <property type="project" value="UniProtKB-KW"/>
</dbReference>
<dbReference type="GO" id="GO:0001849">
    <property type="term" value="F:complement component C1q complex binding"/>
    <property type="evidence" value="ECO:0007669"/>
    <property type="project" value="Ensembl"/>
</dbReference>
<dbReference type="GO" id="GO:0038023">
    <property type="term" value="F:signaling receptor activity"/>
    <property type="evidence" value="ECO:0007669"/>
    <property type="project" value="Ensembl"/>
</dbReference>
<dbReference type="GO" id="GO:0001525">
    <property type="term" value="P:angiogenesis"/>
    <property type="evidence" value="ECO:0007669"/>
    <property type="project" value="Ensembl"/>
</dbReference>
<dbReference type="GO" id="GO:0098609">
    <property type="term" value="P:cell-cell adhesion"/>
    <property type="evidence" value="ECO:0000250"/>
    <property type="project" value="UniProtKB"/>
</dbReference>
<dbReference type="CDD" id="cd00054">
    <property type="entry name" value="EGF_CA"/>
    <property type="match status" value="2"/>
</dbReference>
<dbReference type="FunFam" id="2.10.25.10:FF:000606">
    <property type="entry name" value="Complement component C1q receptor"/>
    <property type="match status" value="1"/>
</dbReference>
<dbReference type="FunFam" id="2.10.25.10:FF:000655">
    <property type="entry name" value="Complement component C1q receptor"/>
    <property type="match status" value="2"/>
</dbReference>
<dbReference type="FunFam" id="2.10.25.10:FF:000809">
    <property type="entry name" value="Complement component C1q receptor"/>
    <property type="match status" value="1"/>
</dbReference>
<dbReference type="FunFam" id="3.10.100.10:FF:000116">
    <property type="entry name" value="Complement component C1q receptor"/>
    <property type="match status" value="1"/>
</dbReference>
<dbReference type="FunFam" id="2.10.25.10:FF:000038">
    <property type="entry name" value="Fibrillin 2"/>
    <property type="match status" value="1"/>
</dbReference>
<dbReference type="Gene3D" id="2.10.25.10">
    <property type="entry name" value="Laminin"/>
    <property type="match status" value="5"/>
</dbReference>
<dbReference type="Gene3D" id="3.10.100.10">
    <property type="entry name" value="Mannose-Binding Protein A, subunit A"/>
    <property type="match status" value="1"/>
</dbReference>
<dbReference type="InterPro" id="IPR001304">
    <property type="entry name" value="C-type_lectin-like"/>
</dbReference>
<dbReference type="InterPro" id="IPR016186">
    <property type="entry name" value="C-type_lectin-like/link_sf"/>
</dbReference>
<dbReference type="InterPro" id="IPR051505">
    <property type="entry name" value="C-type_lectin_domain"/>
</dbReference>
<dbReference type="InterPro" id="IPR026823">
    <property type="entry name" value="cEGF"/>
</dbReference>
<dbReference type="InterPro" id="IPR016187">
    <property type="entry name" value="CTDL_fold"/>
</dbReference>
<dbReference type="InterPro" id="IPR001881">
    <property type="entry name" value="EGF-like_Ca-bd_dom"/>
</dbReference>
<dbReference type="InterPro" id="IPR000742">
    <property type="entry name" value="EGF-like_dom"/>
</dbReference>
<dbReference type="InterPro" id="IPR000152">
    <property type="entry name" value="EGF-type_Asp/Asn_hydroxyl_site"/>
</dbReference>
<dbReference type="InterPro" id="IPR018097">
    <property type="entry name" value="EGF_Ca-bd_CS"/>
</dbReference>
<dbReference type="InterPro" id="IPR009030">
    <property type="entry name" value="Growth_fac_rcpt_cys_sf"/>
</dbReference>
<dbReference type="InterPro" id="IPR049883">
    <property type="entry name" value="NOTCH1_EGF-like"/>
</dbReference>
<dbReference type="PANTHER" id="PTHR14789:SF8">
    <property type="entry name" value="C-TYPE LECTIN DOMAIN FAMILY 14 MEMBER A PRECURSOR-RELATED"/>
    <property type="match status" value="1"/>
</dbReference>
<dbReference type="PANTHER" id="PTHR14789">
    <property type="entry name" value="CHONDROLECTIN VARIANT CHODLFDELTAE"/>
    <property type="match status" value="1"/>
</dbReference>
<dbReference type="Pfam" id="PF12662">
    <property type="entry name" value="cEGF"/>
    <property type="match status" value="1"/>
</dbReference>
<dbReference type="Pfam" id="PF07645">
    <property type="entry name" value="EGF_CA"/>
    <property type="match status" value="2"/>
</dbReference>
<dbReference type="Pfam" id="PF00059">
    <property type="entry name" value="Lectin_C"/>
    <property type="match status" value="1"/>
</dbReference>
<dbReference type="PIRSF" id="PIRSF001775">
    <property type="entry name" value="CD93/CD141"/>
    <property type="match status" value="1"/>
</dbReference>
<dbReference type="SMART" id="SM00034">
    <property type="entry name" value="CLECT"/>
    <property type="match status" value="1"/>
</dbReference>
<dbReference type="SMART" id="SM00181">
    <property type="entry name" value="EGF"/>
    <property type="match status" value="5"/>
</dbReference>
<dbReference type="SMART" id="SM00179">
    <property type="entry name" value="EGF_CA"/>
    <property type="match status" value="5"/>
</dbReference>
<dbReference type="SUPFAM" id="SSF56436">
    <property type="entry name" value="C-type lectin-like"/>
    <property type="match status" value="1"/>
</dbReference>
<dbReference type="SUPFAM" id="SSF57196">
    <property type="entry name" value="EGF/Laminin"/>
    <property type="match status" value="1"/>
</dbReference>
<dbReference type="SUPFAM" id="SSF57184">
    <property type="entry name" value="Growth factor receptor domain"/>
    <property type="match status" value="1"/>
</dbReference>
<dbReference type="PROSITE" id="PS00010">
    <property type="entry name" value="ASX_HYDROXYL"/>
    <property type="match status" value="3"/>
</dbReference>
<dbReference type="PROSITE" id="PS50041">
    <property type="entry name" value="C_TYPE_LECTIN_2"/>
    <property type="match status" value="1"/>
</dbReference>
<dbReference type="PROSITE" id="PS01186">
    <property type="entry name" value="EGF_2"/>
    <property type="match status" value="3"/>
</dbReference>
<dbReference type="PROSITE" id="PS50026">
    <property type="entry name" value="EGF_3"/>
    <property type="match status" value="4"/>
</dbReference>
<dbReference type="PROSITE" id="PS01187">
    <property type="entry name" value="EGF_CA"/>
    <property type="match status" value="3"/>
</dbReference>
<keyword id="KW-0130">Cell adhesion</keyword>
<keyword id="KW-1003">Cell membrane</keyword>
<keyword id="KW-1015">Disulfide bond</keyword>
<keyword id="KW-0245">EGF-like domain</keyword>
<keyword id="KW-0325">Glycoprotein</keyword>
<keyword id="KW-0430">Lectin</keyword>
<keyword id="KW-0472">Membrane</keyword>
<keyword id="KW-0597">Phosphoprotein</keyword>
<keyword id="KW-0675">Receptor</keyword>
<keyword id="KW-1185">Reference proteome</keyword>
<keyword id="KW-0677">Repeat</keyword>
<keyword id="KW-0732">Signal</keyword>
<keyword id="KW-0812">Transmembrane</keyword>
<keyword id="KW-1133">Transmembrane helix</keyword>